<sequence length="319" mass="36034">MKPENKLPVLDLISAEMKTVVNTLQPDLPSWPATGTIAEQRQYYTLERRFWNAGAPEMATRAYMVPTKYGQVETRLFCPQPDSPATLFYLHGGGFILGNLDTHDRIMRLLASYSQCTVIGIDYPLSPEARFPQAIEEIVAACCYFHQQAEDYQINMSRIGFAGDSAGAMLALASALWLRDKQIDCGKIAGVLLWYGLYGLRDSVTRRLLGGVWDGLTQQDLQMYEEAYLSNDADRESPYYCLFNNDLTREVPPCFIAGAEFDPLLDDSRLLYQTLAAHQQPCEFKLYPGTLHAFLHYSRMMKTADEALRDGAQFFTAQL</sequence>
<gene>
    <name evidence="2" type="primary">aes</name>
    <name type="ordered locus">ECSE_0501</name>
</gene>
<name>AES_ECOSE</name>
<accession>B6I0B9</accession>
<dbReference type="EC" id="3.1.1.-" evidence="2"/>
<dbReference type="EMBL" id="AP009240">
    <property type="protein sequence ID" value="BAG76025.1"/>
    <property type="molecule type" value="Genomic_DNA"/>
</dbReference>
<dbReference type="RefSeq" id="WP_000801832.1">
    <property type="nucleotide sequence ID" value="NC_011415.1"/>
</dbReference>
<dbReference type="SMR" id="B6I0B9"/>
<dbReference type="ESTHER" id="ecoli-Aes">
    <property type="family name" value="Acetyl_esterase"/>
</dbReference>
<dbReference type="MEROPS" id="S09.A47"/>
<dbReference type="KEGG" id="ecy:ECSE_0501"/>
<dbReference type="HOGENOM" id="CLU_012494_6_4_6"/>
<dbReference type="Proteomes" id="UP000008199">
    <property type="component" value="Chromosome"/>
</dbReference>
<dbReference type="GO" id="GO:0005737">
    <property type="term" value="C:cytoplasm"/>
    <property type="evidence" value="ECO:0007669"/>
    <property type="project" value="UniProtKB-SubCell"/>
</dbReference>
<dbReference type="GO" id="GO:0052689">
    <property type="term" value="F:carboxylic ester hydrolase activity"/>
    <property type="evidence" value="ECO:0007669"/>
    <property type="project" value="UniProtKB-UniRule"/>
</dbReference>
<dbReference type="FunFam" id="3.40.50.1820:FF:000035">
    <property type="entry name" value="Acetyl esterase"/>
    <property type="match status" value="1"/>
</dbReference>
<dbReference type="Gene3D" id="3.40.50.1820">
    <property type="entry name" value="alpha/beta hydrolase"/>
    <property type="match status" value="1"/>
</dbReference>
<dbReference type="HAMAP" id="MF_01958">
    <property type="entry name" value="Acetyl_esterase"/>
    <property type="match status" value="1"/>
</dbReference>
<dbReference type="InterPro" id="IPR013094">
    <property type="entry name" value="AB_hydrolase_3"/>
</dbReference>
<dbReference type="InterPro" id="IPR029058">
    <property type="entry name" value="AB_hydrolase_fold"/>
</dbReference>
<dbReference type="InterPro" id="IPR023508">
    <property type="entry name" value="Acetyl_esterase"/>
</dbReference>
<dbReference type="InterPro" id="IPR050300">
    <property type="entry name" value="GDXG_lipolytic_enzyme"/>
</dbReference>
<dbReference type="InterPro" id="IPR002168">
    <property type="entry name" value="Lipase_GDXG_HIS_AS"/>
</dbReference>
<dbReference type="InterPro" id="IPR033140">
    <property type="entry name" value="Lipase_GDXG_put_SER_AS"/>
</dbReference>
<dbReference type="NCBIfam" id="NF007547">
    <property type="entry name" value="PRK10162.1"/>
    <property type="match status" value="1"/>
</dbReference>
<dbReference type="PANTHER" id="PTHR48081">
    <property type="entry name" value="AB HYDROLASE SUPERFAMILY PROTEIN C4A8.06C"/>
    <property type="match status" value="1"/>
</dbReference>
<dbReference type="PANTHER" id="PTHR48081:SF8">
    <property type="entry name" value="ALPHA_BETA HYDROLASE FOLD-3 DOMAIN-CONTAINING PROTEIN-RELATED"/>
    <property type="match status" value="1"/>
</dbReference>
<dbReference type="Pfam" id="PF07859">
    <property type="entry name" value="Abhydrolase_3"/>
    <property type="match status" value="1"/>
</dbReference>
<dbReference type="SUPFAM" id="SSF53474">
    <property type="entry name" value="alpha/beta-Hydrolases"/>
    <property type="match status" value="1"/>
</dbReference>
<dbReference type="PROSITE" id="PS01173">
    <property type="entry name" value="LIPASE_GDXG_HIS"/>
    <property type="match status" value="1"/>
</dbReference>
<dbReference type="PROSITE" id="PS01174">
    <property type="entry name" value="LIPASE_GDXG_SER"/>
    <property type="match status" value="1"/>
</dbReference>
<evidence type="ECO:0000250" key="1">
    <source>
        <dbReference type="UniProtKB" id="Q5NUF3"/>
    </source>
</evidence>
<evidence type="ECO:0000255" key="2">
    <source>
        <dbReference type="HAMAP-Rule" id="MF_01958"/>
    </source>
</evidence>
<protein>
    <recommendedName>
        <fullName evidence="2">Acetyl esterase</fullName>
        <ecNumber evidence="2">3.1.1.-</ecNumber>
    </recommendedName>
</protein>
<comment type="function">
    <text evidence="2">Displays esterase activity towards short chain fatty esters (acyl chain length of up to 8 carbons). Able to hydrolyze triacetylglycerol (triacetin) and tributyrylglycerol (tributyrin), but not trioleylglycerol (triolein) or cholesterol oleate. Negatively regulates MalT activity by antagonizing maltotriose binding. Inhibits MelA galactosidase activity.</text>
</comment>
<comment type="subunit">
    <text evidence="2">Homodimer. Interacts with MalT and MelA.</text>
</comment>
<comment type="subcellular location">
    <subcellularLocation>
        <location evidence="2">Cytoplasm</location>
    </subcellularLocation>
</comment>
<comment type="similarity">
    <text evidence="2">Belongs to the 'GDXG' lipolytic enzyme family.</text>
</comment>
<organism>
    <name type="scientific">Escherichia coli (strain SE11)</name>
    <dbReference type="NCBI Taxonomy" id="409438"/>
    <lineage>
        <taxon>Bacteria</taxon>
        <taxon>Pseudomonadati</taxon>
        <taxon>Pseudomonadota</taxon>
        <taxon>Gammaproteobacteria</taxon>
        <taxon>Enterobacterales</taxon>
        <taxon>Enterobacteriaceae</taxon>
        <taxon>Escherichia</taxon>
    </lineage>
</organism>
<reference key="1">
    <citation type="journal article" date="2008" name="DNA Res.">
        <title>Complete genome sequence and comparative analysis of the wild-type commensal Escherichia coli strain SE11 isolated from a healthy adult.</title>
        <authorList>
            <person name="Oshima K."/>
            <person name="Toh H."/>
            <person name="Ogura Y."/>
            <person name="Sasamoto H."/>
            <person name="Morita H."/>
            <person name="Park S.-H."/>
            <person name="Ooka T."/>
            <person name="Iyoda S."/>
            <person name="Taylor T.D."/>
            <person name="Hayashi T."/>
            <person name="Itoh K."/>
            <person name="Hattori M."/>
        </authorList>
    </citation>
    <scope>NUCLEOTIDE SEQUENCE [LARGE SCALE GENOMIC DNA]</scope>
    <source>
        <strain>SE11</strain>
    </source>
</reference>
<feature type="chain" id="PRO_1000188987" description="Acetyl esterase">
    <location>
        <begin position="1"/>
        <end position="319"/>
    </location>
</feature>
<feature type="short sequence motif" description="Involved in the stabilization of the negatively charged intermediate by the formation of the oxyanion hole" evidence="1">
    <location>
        <begin position="91"/>
        <end position="93"/>
    </location>
</feature>
<feature type="active site" evidence="2">
    <location>
        <position position="165"/>
    </location>
</feature>
<feature type="active site" evidence="2">
    <location>
        <position position="262"/>
    </location>
</feature>
<feature type="active site" evidence="2">
    <location>
        <position position="292"/>
    </location>
</feature>
<proteinExistence type="inferred from homology"/>
<keyword id="KW-0963">Cytoplasm</keyword>
<keyword id="KW-0378">Hydrolase</keyword>
<keyword id="KW-0719">Serine esterase</keyword>